<comment type="function">
    <text evidence="1">Could be a mediator in iron transactions between iron acquisition and iron-requiring processes, such as synthesis and/or repair of Fe-S clusters in biosynthetic enzymes.</text>
</comment>
<comment type="similarity">
    <text evidence="1">Belongs to the Fe(2+)-trafficking protein family.</text>
</comment>
<evidence type="ECO:0000255" key="1">
    <source>
        <dbReference type="HAMAP-Rule" id="MF_00686"/>
    </source>
</evidence>
<organism>
    <name type="scientific">Baumannia cicadellinicola subsp. Homalodisca coagulata</name>
    <dbReference type="NCBI Taxonomy" id="374463"/>
    <lineage>
        <taxon>Bacteria</taxon>
        <taxon>Pseudomonadati</taxon>
        <taxon>Pseudomonadota</taxon>
        <taxon>Gammaproteobacteria</taxon>
        <taxon>Candidatus Palibaumannia</taxon>
    </lineage>
</organism>
<gene>
    <name type="ordered locus">BCI_0478</name>
</gene>
<dbReference type="EMBL" id="CP000238">
    <property type="protein sequence ID" value="ABF13782.1"/>
    <property type="molecule type" value="Genomic_DNA"/>
</dbReference>
<dbReference type="RefSeq" id="WP_011520649.1">
    <property type="nucleotide sequence ID" value="NC_007984.1"/>
</dbReference>
<dbReference type="SMR" id="Q1LSZ8"/>
<dbReference type="STRING" id="374463.BCI_0478"/>
<dbReference type="KEGG" id="bci:BCI_0478"/>
<dbReference type="HOGENOM" id="CLU_170994_0_0_6"/>
<dbReference type="OrthoDB" id="9804318at2"/>
<dbReference type="Proteomes" id="UP000002427">
    <property type="component" value="Chromosome"/>
</dbReference>
<dbReference type="GO" id="GO:0005829">
    <property type="term" value="C:cytosol"/>
    <property type="evidence" value="ECO:0007669"/>
    <property type="project" value="TreeGrafter"/>
</dbReference>
<dbReference type="GO" id="GO:0005506">
    <property type="term" value="F:iron ion binding"/>
    <property type="evidence" value="ECO:0007669"/>
    <property type="project" value="UniProtKB-UniRule"/>
</dbReference>
<dbReference type="GO" id="GO:0034599">
    <property type="term" value="P:cellular response to oxidative stress"/>
    <property type="evidence" value="ECO:0007669"/>
    <property type="project" value="TreeGrafter"/>
</dbReference>
<dbReference type="FunFam" id="1.10.3880.10:FF:000001">
    <property type="entry name" value="Probable Fe(2+)-trafficking protein"/>
    <property type="match status" value="1"/>
</dbReference>
<dbReference type="Gene3D" id="1.10.3880.10">
    <property type="entry name" value="Fe(II) trafficking protein YggX"/>
    <property type="match status" value="1"/>
</dbReference>
<dbReference type="HAMAP" id="MF_00686">
    <property type="entry name" value="Fe_traffic_YggX"/>
    <property type="match status" value="1"/>
</dbReference>
<dbReference type="InterPro" id="IPR007457">
    <property type="entry name" value="Fe_traffick_prot_YggX"/>
</dbReference>
<dbReference type="InterPro" id="IPR036766">
    <property type="entry name" value="Fe_traffick_prot_YggX_sf"/>
</dbReference>
<dbReference type="NCBIfam" id="NF003817">
    <property type="entry name" value="PRK05408.1"/>
    <property type="match status" value="1"/>
</dbReference>
<dbReference type="PANTHER" id="PTHR36965">
    <property type="entry name" value="FE(2+)-TRAFFICKING PROTEIN-RELATED"/>
    <property type="match status" value="1"/>
</dbReference>
<dbReference type="PANTHER" id="PTHR36965:SF1">
    <property type="entry name" value="FE(2+)-TRAFFICKING PROTEIN-RELATED"/>
    <property type="match status" value="1"/>
</dbReference>
<dbReference type="Pfam" id="PF04362">
    <property type="entry name" value="Iron_traffic"/>
    <property type="match status" value="1"/>
</dbReference>
<dbReference type="PIRSF" id="PIRSF029827">
    <property type="entry name" value="Fe_traffic_YggX"/>
    <property type="match status" value="1"/>
</dbReference>
<dbReference type="SUPFAM" id="SSF111148">
    <property type="entry name" value="YggX-like"/>
    <property type="match status" value="1"/>
</dbReference>
<accession>Q1LSZ8</accession>
<keyword id="KW-0408">Iron</keyword>
<keyword id="KW-1185">Reference proteome</keyword>
<reference key="1">
    <citation type="journal article" date="2006" name="PLoS Biol.">
        <title>Metabolic complementarity and genomics of the dual bacterial symbiosis of sharpshooters.</title>
        <authorList>
            <person name="Wu D."/>
            <person name="Daugherty S.C."/>
            <person name="Van Aken S.E."/>
            <person name="Pai G.H."/>
            <person name="Watkins K.L."/>
            <person name="Khouri H."/>
            <person name="Tallon L.J."/>
            <person name="Zaborsky J.M."/>
            <person name="Dunbar H.E."/>
            <person name="Tran P.L."/>
            <person name="Moran N.A."/>
            <person name="Eisen J.A."/>
        </authorList>
    </citation>
    <scope>NUCLEOTIDE SEQUENCE [LARGE SCALE GENOMIC DNA]</scope>
</reference>
<name>FETP_BAUCH</name>
<proteinExistence type="inferred from homology"/>
<sequence length="77" mass="9204">MSKNIYCVFLRKQAEGQDFQSYPGELGKHIFNNISKEAWAKWQQKQTMLINENKLNLISNTDRNFLEKEMIKFLFKS</sequence>
<protein>
    <recommendedName>
        <fullName evidence="1">Probable Fe(2+)-trafficking protein</fullName>
    </recommendedName>
</protein>
<feature type="chain" id="PRO_1000045018" description="Probable Fe(2+)-trafficking protein">
    <location>
        <begin position="1"/>
        <end position="77"/>
    </location>
</feature>